<protein>
    <recommendedName>
        <fullName>Cholinesterase</fullName>
        <ecNumber>3.1.1.8</ecNumber>
    </recommendedName>
    <alternativeName>
        <fullName>Acylcholine acylhydrolase</fullName>
    </alternativeName>
    <alternativeName>
        <fullName>Butyrylcholine esterase</fullName>
    </alternativeName>
    <alternativeName>
        <fullName>Choline esterase II</fullName>
    </alternativeName>
    <alternativeName>
        <fullName>Pseudocholinesterase</fullName>
    </alternativeName>
</protein>
<organism>
    <name type="scientific">Bos taurus</name>
    <name type="common">Bovine</name>
    <dbReference type="NCBI Taxonomy" id="9913"/>
    <lineage>
        <taxon>Eukaryota</taxon>
        <taxon>Metazoa</taxon>
        <taxon>Chordata</taxon>
        <taxon>Craniata</taxon>
        <taxon>Vertebrata</taxon>
        <taxon>Euteleostomi</taxon>
        <taxon>Mammalia</taxon>
        <taxon>Eutheria</taxon>
        <taxon>Laurasiatheria</taxon>
        <taxon>Artiodactyla</taxon>
        <taxon>Ruminantia</taxon>
        <taxon>Pecora</taxon>
        <taxon>Bovidae</taxon>
        <taxon>Bovinae</taxon>
        <taxon>Bos</taxon>
    </lineage>
</organism>
<sequence>MQSRSTVIYIRFVLWFLLLWVLFEKSHTEEDIIITTKNGKVRGMHLPVLGGTVTAFLGIPYAQPPLGRLRFKKPQSLTKWPDIWNATKYANSCYQNTDQSFPGFLGSEMWNPNTDLSEDCLYLNVWIPTPKPKNATVMIWIYGGSFQTGTSSLHVYDGKFLARVERVIVVSMNYRVGALGFLALPGNPEAPGNVGLFDQQLALQWVQKNIAAFGGNPKSVTLFGESAGAASVSLHLLSPESHPLFTRAILQSGSSNAPWAVTSRYEARNRTLTLAKFIGCSRENDTEIIKCLRNKDPQEILRHEVFVVPYGTLLSVNFGPTVDGDFLTDMPDTLLQLGQFKKTQILVGVNKDEGTAFLVYGAPGFSKDNNSIITRKEFQEGLKIFFPGVSEFGKESILFHYMDWLDDQRAEKYREALDDVVGDYNIICPALEFTKKFSDMGNNAFFYYFEHRSSKLPWPEWMGVMHGYEIEFVFGLPLERRVNYTKAEEIFSRSIMKRWANFAKYGNPNGTQNNSTRWPVFKSNEQKYFTLNTESPKVNTKLRAQQCRFWTLFFPKVLEITGNIDEVEREWKAGFHRWNNYMMDWKNQFNDYTSKKESCAGL</sequence>
<keyword id="KW-1015">Disulfide bond</keyword>
<keyword id="KW-0325">Glycoprotein</keyword>
<keyword id="KW-0378">Hydrolase</keyword>
<keyword id="KW-0597">Phosphoprotein</keyword>
<keyword id="KW-1185">Reference proteome</keyword>
<keyword id="KW-0964">Secreted</keyword>
<keyword id="KW-0719">Serine esterase</keyword>
<keyword id="KW-0732">Signal</keyword>
<name>CHLE_BOVIN</name>
<reference key="1">
    <citation type="submission" date="2006-09" db="EMBL/GenBank/DDBJ databases">
        <authorList>
            <consortium name="NIH - Mammalian Gene Collection (MGC) project"/>
        </authorList>
    </citation>
    <scope>NUCLEOTIDE SEQUENCE [LARGE SCALE MRNA]</scope>
    <source>
        <strain>Hereford</strain>
        <tissue>Fetal cerebellum</tissue>
    </source>
</reference>
<reference key="2">
    <citation type="journal article" date="1991" name="J. Biol. Chem.">
        <title>Use of the polymerase chain reaction for homology probing of butyrylcholinesterase from several vertebrates.</title>
        <authorList>
            <person name="Arpagaus M."/>
            <person name="Chatonnet A."/>
            <person name="Masson P."/>
            <person name="Newton M."/>
            <person name="Vaughan T.A."/>
            <person name="Bartels C.F."/>
            <person name="Nogueira C.P."/>
            <person name="la Du B.N."/>
            <person name="Lockridge O."/>
        </authorList>
    </citation>
    <scope>NUCLEOTIDE SEQUENCE [GENOMIC DNA] OF 96-236</scope>
    <source>
        <tissue>Lung</tissue>
    </source>
</reference>
<comment type="function">
    <text evidence="1">Esterase with broad substrate specificity. Contributes to the inactivation of the neurotransmitter acetylcholine. Can degrade neurotoxic organophosphate esters (By similarity).</text>
</comment>
<comment type="catalytic activity">
    <reaction>
        <text>an acylcholine + H2O = a carboxylate + choline + H(+)</text>
        <dbReference type="Rhea" id="RHEA:21964"/>
        <dbReference type="ChEBI" id="CHEBI:15354"/>
        <dbReference type="ChEBI" id="CHEBI:15377"/>
        <dbReference type="ChEBI" id="CHEBI:15378"/>
        <dbReference type="ChEBI" id="CHEBI:29067"/>
        <dbReference type="ChEBI" id="CHEBI:35287"/>
        <dbReference type="EC" id="3.1.1.8"/>
    </reaction>
</comment>
<comment type="subunit">
    <text evidence="1">Homotetramer; disulfide-linked. Dimer of dimers (By similarity).</text>
</comment>
<comment type="subcellular location">
    <subcellularLocation>
        <location evidence="1">Secreted</location>
    </subcellularLocation>
</comment>
<comment type="tissue specificity">
    <text>Present in most cells except erythrocytes.</text>
</comment>
<comment type="similarity">
    <text evidence="5">Belongs to the type-B carboxylesterase/lipase family.</text>
</comment>
<evidence type="ECO:0000250" key="1"/>
<evidence type="ECO:0000250" key="2">
    <source>
        <dbReference type="UniProtKB" id="P06276"/>
    </source>
</evidence>
<evidence type="ECO:0000255" key="3"/>
<evidence type="ECO:0000255" key="4">
    <source>
        <dbReference type="PROSITE-ProRule" id="PRU10039"/>
    </source>
</evidence>
<evidence type="ECO:0000305" key="5"/>
<dbReference type="EC" id="3.1.1.8"/>
<dbReference type="EMBL" id="BC123600">
    <property type="protein sequence ID" value="AAI23601.1"/>
    <property type="molecule type" value="mRNA"/>
</dbReference>
<dbReference type="EMBL" id="M62410">
    <property type="protein sequence ID" value="AAA51412.1"/>
    <property type="molecule type" value="Genomic_DNA"/>
</dbReference>
<dbReference type="PIR" id="F39768">
    <property type="entry name" value="F39768"/>
</dbReference>
<dbReference type="RefSeq" id="NP_001070374.1">
    <property type="nucleotide sequence ID" value="NM_001076906.2"/>
</dbReference>
<dbReference type="SMR" id="P32749"/>
<dbReference type="FunCoup" id="P32749">
    <property type="interactions" value="15"/>
</dbReference>
<dbReference type="STRING" id="9913.ENSBTAP00000014794"/>
<dbReference type="ESTHER" id="bovin-BCHE">
    <property type="family name" value="BCHE"/>
</dbReference>
<dbReference type="MEROPS" id="S09.980"/>
<dbReference type="GlyCosmos" id="P32749">
    <property type="glycosylation" value="9 sites, No reported glycans"/>
</dbReference>
<dbReference type="GlyGen" id="P32749">
    <property type="glycosylation" value="9 sites"/>
</dbReference>
<dbReference type="PaxDb" id="9913-ENSBTAP00000014794"/>
<dbReference type="GeneID" id="534616"/>
<dbReference type="KEGG" id="bta:534616"/>
<dbReference type="CTD" id="590"/>
<dbReference type="VEuPathDB" id="HostDB:ENSBTAG00000011139"/>
<dbReference type="eggNOG" id="KOG4389">
    <property type="taxonomic scope" value="Eukaryota"/>
</dbReference>
<dbReference type="HOGENOM" id="CLU_006586_13_0_1"/>
<dbReference type="InParanoid" id="P32749"/>
<dbReference type="OMA" id="YICPGID"/>
<dbReference type="OrthoDB" id="9000293at2759"/>
<dbReference type="TreeFam" id="TF315470"/>
<dbReference type="BRENDA" id="3.1.1.8">
    <property type="organism ID" value="908"/>
</dbReference>
<dbReference type="Reactome" id="R-BTA-422085">
    <property type="pathway name" value="Synthesis, secretion, and deacylation of Ghrelin"/>
</dbReference>
<dbReference type="Reactome" id="R-BTA-9749641">
    <property type="pathway name" value="Aspirin ADME"/>
</dbReference>
<dbReference type="Proteomes" id="UP000009136">
    <property type="component" value="Chromosome 1"/>
</dbReference>
<dbReference type="Bgee" id="ENSBTAG00000011139">
    <property type="expression patterns" value="Expressed in duodenum and 97 other cell types or tissues"/>
</dbReference>
<dbReference type="GO" id="GO:0005615">
    <property type="term" value="C:extracellular space"/>
    <property type="evidence" value="ECO:0000318"/>
    <property type="project" value="GO_Central"/>
</dbReference>
<dbReference type="GO" id="GO:0005886">
    <property type="term" value="C:plasma membrane"/>
    <property type="evidence" value="ECO:0000318"/>
    <property type="project" value="GO_Central"/>
</dbReference>
<dbReference type="GO" id="GO:0003990">
    <property type="term" value="F:acetylcholinesterase activity"/>
    <property type="evidence" value="ECO:0000250"/>
    <property type="project" value="UniProtKB"/>
</dbReference>
<dbReference type="GO" id="GO:0004104">
    <property type="term" value="F:cholinesterase activity"/>
    <property type="evidence" value="ECO:0000250"/>
    <property type="project" value="UniProtKB"/>
</dbReference>
<dbReference type="GO" id="GO:0006581">
    <property type="term" value="P:acetylcholine catabolic process"/>
    <property type="evidence" value="ECO:0000318"/>
    <property type="project" value="GO_Central"/>
</dbReference>
<dbReference type="GO" id="GO:0019695">
    <property type="term" value="P:choline metabolic process"/>
    <property type="evidence" value="ECO:0000318"/>
    <property type="project" value="GO_Central"/>
</dbReference>
<dbReference type="CDD" id="cd00312">
    <property type="entry name" value="Esterase_lipase"/>
    <property type="match status" value="1"/>
</dbReference>
<dbReference type="FunFam" id="3.40.50.1820:FF:000029">
    <property type="entry name" value="Acetylcholinesterase"/>
    <property type="match status" value="1"/>
</dbReference>
<dbReference type="Gene3D" id="3.40.50.1820">
    <property type="entry name" value="alpha/beta hydrolase"/>
    <property type="match status" value="1"/>
</dbReference>
<dbReference type="InterPro" id="IPR029058">
    <property type="entry name" value="AB_hydrolase_fold"/>
</dbReference>
<dbReference type="InterPro" id="IPR050654">
    <property type="entry name" value="AChE-related_enzymes"/>
</dbReference>
<dbReference type="InterPro" id="IPR014788">
    <property type="entry name" value="AChE_tetra"/>
</dbReference>
<dbReference type="InterPro" id="IPR002018">
    <property type="entry name" value="CarbesteraseB"/>
</dbReference>
<dbReference type="InterPro" id="IPR019826">
    <property type="entry name" value="Carboxylesterase_B_AS"/>
</dbReference>
<dbReference type="InterPro" id="IPR019819">
    <property type="entry name" value="Carboxylesterase_B_CS"/>
</dbReference>
<dbReference type="InterPro" id="IPR000997">
    <property type="entry name" value="Cholinesterase"/>
</dbReference>
<dbReference type="PANTHER" id="PTHR43918">
    <property type="entry name" value="ACETYLCHOLINESTERASE"/>
    <property type="match status" value="1"/>
</dbReference>
<dbReference type="PANTHER" id="PTHR43918:SF5">
    <property type="entry name" value="CHOLINESTERASE"/>
    <property type="match status" value="1"/>
</dbReference>
<dbReference type="Pfam" id="PF08674">
    <property type="entry name" value="AChE_tetra"/>
    <property type="match status" value="1"/>
</dbReference>
<dbReference type="Pfam" id="PF00135">
    <property type="entry name" value="COesterase"/>
    <property type="match status" value="1"/>
</dbReference>
<dbReference type="PRINTS" id="PR00878">
    <property type="entry name" value="CHOLNESTRASE"/>
</dbReference>
<dbReference type="SUPFAM" id="SSF53474">
    <property type="entry name" value="alpha/beta-Hydrolases"/>
    <property type="match status" value="1"/>
</dbReference>
<dbReference type="PROSITE" id="PS00122">
    <property type="entry name" value="CARBOXYLESTERASE_B_1"/>
    <property type="match status" value="1"/>
</dbReference>
<dbReference type="PROSITE" id="PS00941">
    <property type="entry name" value="CARBOXYLESTERASE_B_2"/>
    <property type="match status" value="1"/>
</dbReference>
<proteinExistence type="evidence at transcript level"/>
<gene>
    <name type="primary">BCHE</name>
</gene>
<accession>P32749</accession>
<accession>Q08DR6</accession>
<feature type="signal peptide" evidence="3">
    <location>
        <begin position="1"/>
        <end position="28"/>
    </location>
</feature>
<feature type="chain" id="PRO_0000070283" description="Cholinesterase">
    <location>
        <begin position="29"/>
        <end position="602"/>
    </location>
</feature>
<feature type="active site" description="Acyl-ester intermediate" evidence="4">
    <location>
        <position position="226"/>
    </location>
</feature>
<feature type="active site" description="Charge relay system" evidence="1">
    <location>
        <position position="353"/>
    </location>
</feature>
<feature type="active site" description="Charge relay system" evidence="1">
    <location>
        <position position="466"/>
    </location>
</feature>
<feature type="binding site" evidence="1">
    <location>
        <begin position="144"/>
        <end position="145"/>
    </location>
    <ligand>
        <name>substrate</name>
    </ligand>
</feature>
<feature type="modified residue" description="Phosphoserine" evidence="2">
    <location>
        <position position="226"/>
    </location>
</feature>
<feature type="glycosylation site" description="N-linked (GlcNAc...) asparagine" evidence="3">
    <location>
        <position position="85"/>
    </location>
</feature>
<feature type="glycosylation site" description="N-linked (GlcNAc...) asparagine" evidence="3">
    <location>
        <position position="134"/>
    </location>
</feature>
<feature type="glycosylation site" description="N-linked (GlcNAc...) asparagine" evidence="3">
    <location>
        <position position="269"/>
    </location>
</feature>
<feature type="glycosylation site" description="N-linked (GlcNAc...) asparagine" evidence="3">
    <location>
        <position position="284"/>
    </location>
</feature>
<feature type="glycosylation site" description="N-linked (GlcNAc...) asparagine" evidence="3">
    <location>
        <position position="369"/>
    </location>
</feature>
<feature type="glycosylation site" description="N-linked (GlcNAc...) asparagine" evidence="3">
    <location>
        <position position="483"/>
    </location>
</feature>
<feature type="glycosylation site" description="N-linked (GlcNAc...) asparagine" evidence="3">
    <location>
        <position position="509"/>
    </location>
</feature>
<feature type="glycosylation site" description="N-linked (GlcNAc...) asparagine" evidence="3">
    <location>
        <position position="513"/>
    </location>
</feature>
<feature type="glycosylation site" description="N-linked (GlcNAc...) asparagine" evidence="3">
    <location>
        <position position="514"/>
    </location>
</feature>